<feature type="chain" id="PRO_1000023043" description="UDP-N-acetylglucosamine 1-carboxyvinyltransferase">
    <location>
        <begin position="1"/>
        <end position="422"/>
    </location>
</feature>
<feature type="active site" description="Proton donor" evidence="1">
    <location>
        <position position="117"/>
    </location>
</feature>
<feature type="binding site" evidence="1">
    <location>
        <begin position="22"/>
        <end position="23"/>
    </location>
    <ligand>
        <name>phosphoenolpyruvate</name>
        <dbReference type="ChEBI" id="CHEBI:58702"/>
    </ligand>
</feature>
<feature type="binding site" evidence="1">
    <location>
        <position position="93"/>
    </location>
    <ligand>
        <name>UDP-N-acetyl-alpha-D-glucosamine</name>
        <dbReference type="ChEBI" id="CHEBI:57705"/>
    </ligand>
</feature>
<feature type="binding site" evidence="1">
    <location>
        <begin position="122"/>
        <end position="126"/>
    </location>
    <ligand>
        <name>UDP-N-acetyl-alpha-D-glucosamine</name>
        <dbReference type="ChEBI" id="CHEBI:57705"/>
    </ligand>
</feature>
<feature type="binding site" evidence="1">
    <location>
        <position position="308"/>
    </location>
    <ligand>
        <name>UDP-N-acetyl-alpha-D-glucosamine</name>
        <dbReference type="ChEBI" id="CHEBI:57705"/>
    </ligand>
</feature>
<feature type="binding site" evidence="1">
    <location>
        <position position="330"/>
    </location>
    <ligand>
        <name>UDP-N-acetyl-alpha-D-glucosamine</name>
        <dbReference type="ChEBI" id="CHEBI:57705"/>
    </ligand>
</feature>
<feature type="modified residue" description="2-(S-cysteinyl)pyruvic acid O-phosphothioketal" evidence="1">
    <location>
        <position position="117"/>
    </location>
</feature>
<name>MURA_HELAH</name>
<dbReference type="EC" id="2.5.1.7" evidence="1"/>
<dbReference type="EMBL" id="AM260522">
    <property type="protein sequence ID" value="CAJ99830.1"/>
    <property type="molecule type" value="Genomic_DNA"/>
</dbReference>
<dbReference type="RefSeq" id="WP_011577939.1">
    <property type="nucleotide sequence ID" value="NC_008229.1"/>
</dbReference>
<dbReference type="SMR" id="Q17WZ6"/>
<dbReference type="STRING" id="382638.Hac_1066"/>
<dbReference type="GeneID" id="31758427"/>
<dbReference type="KEGG" id="hac:Hac_1066"/>
<dbReference type="eggNOG" id="COG0766">
    <property type="taxonomic scope" value="Bacteria"/>
</dbReference>
<dbReference type="HOGENOM" id="CLU_027387_0_0_7"/>
<dbReference type="OrthoDB" id="9803760at2"/>
<dbReference type="BioCyc" id="HACI382638:HAC_RS04560-MONOMER"/>
<dbReference type="UniPathway" id="UPA00219"/>
<dbReference type="Proteomes" id="UP000000775">
    <property type="component" value="Chromosome"/>
</dbReference>
<dbReference type="GO" id="GO:0005737">
    <property type="term" value="C:cytoplasm"/>
    <property type="evidence" value="ECO:0007669"/>
    <property type="project" value="UniProtKB-SubCell"/>
</dbReference>
<dbReference type="GO" id="GO:0008760">
    <property type="term" value="F:UDP-N-acetylglucosamine 1-carboxyvinyltransferase activity"/>
    <property type="evidence" value="ECO:0007669"/>
    <property type="project" value="UniProtKB-UniRule"/>
</dbReference>
<dbReference type="GO" id="GO:0051301">
    <property type="term" value="P:cell division"/>
    <property type="evidence" value="ECO:0007669"/>
    <property type="project" value="UniProtKB-KW"/>
</dbReference>
<dbReference type="GO" id="GO:0071555">
    <property type="term" value="P:cell wall organization"/>
    <property type="evidence" value="ECO:0007669"/>
    <property type="project" value="UniProtKB-KW"/>
</dbReference>
<dbReference type="GO" id="GO:0009252">
    <property type="term" value="P:peptidoglycan biosynthetic process"/>
    <property type="evidence" value="ECO:0007669"/>
    <property type="project" value="UniProtKB-UniRule"/>
</dbReference>
<dbReference type="GO" id="GO:0008360">
    <property type="term" value="P:regulation of cell shape"/>
    <property type="evidence" value="ECO:0007669"/>
    <property type="project" value="UniProtKB-KW"/>
</dbReference>
<dbReference type="GO" id="GO:0019277">
    <property type="term" value="P:UDP-N-acetylgalactosamine biosynthetic process"/>
    <property type="evidence" value="ECO:0007669"/>
    <property type="project" value="InterPro"/>
</dbReference>
<dbReference type="CDD" id="cd01555">
    <property type="entry name" value="UdpNAET"/>
    <property type="match status" value="1"/>
</dbReference>
<dbReference type="FunFam" id="3.65.10.10:FF:000001">
    <property type="entry name" value="UDP-N-acetylglucosamine 1-carboxyvinyltransferase"/>
    <property type="match status" value="1"/>
</dbReference>
<dbReference type="Gene3D" id="3.65.10.10">
    <property type="entry name" value="Enolpyruvate transferase domain"/>
    <property type="match status" value="2"/>
</dbReference>
<dbReference type="HAMAP" id="MF_00111">
    <property type="entry name" value="MurA"/>
    <property type="match status" value="1"/>
</dbReference>
<dbReference type="InterPro" id="IPR001986">
    <property type="entry name" value="Enolpyruvate_Tfrase_dom"/>
</dbReference>
<dbReference type="InterPro" id="IPR036968">
    <property type="entry name" value="Enolpyruvate_Tfrase_sf"/>
</dbReference>
<dbReference type="InterPro" id="IPR050068">
    <property type="entry name" value="MurA_subfamily"/>
</dbReference>
<dbReference type="InterPro" id="IPR013792">
    <property type="entry name" value="RNA3'P_cycl/enolpyr_Trfase_a/b"/>
</dbReference>
<dbReference type="InterPro" id="IPR005750">
    <property type="entry name" value="UDP_GlcNAc_COvinyl_MurA"/>
</dbReference>
<dbReference type="NCBIfam" id="TIGR01072">
    <property type="entry name" value="murA"/>
    <property type="match status" value="1"/>
</dbReference>
<dbReference type="NCBIfam" id="NF006873">
    <property type="entry name" value="PRK09369.1"/>
    <property type="match status" value="1"/>
</dbReference>
<dbReference type="PANTHER" id="PTHR43783">
    <property type="entry name" value="UDP-N-ACETYLGLUCOSAMINE 1-CARBOXYVINYLTRANSFERASE"/>
    <property type="match status" value="1"/>
</dbReference>
<dbReference type="PANTHER" id="PTHR43783:SF1">
    <property type="entry name" value="UDP-N-ACETYLGLUCOSAMINE 1-CARBOXYVINYLTRANSFERASE"/>
    <property type="match status" value="1"/>
</dbReference>
<dbReference type="Pfam" id="PF00275">
    <property type="entry name" value="EPSP_synthase"/>
    <property type="match status" value="1"/>
</dbReference>
<dbReference type="SUPFAM" id="SSF55205">
    <property type="entry name" value="EPT/RTPC-like"/>
    <property type="match status" value="1"/>
</dbReference>
<comment type="function">
    <text evidence="1">Cell wall formation. Adds enolpyruvyl to UDP-N-acetylglucosamine.</text>
</comment>
<comment type="catalytic activity">
    <reaction evidence="1">
        <text>phosphoenolpyruvate + UDP-N-acetyl-alpha-D-glucosamine = UDP-N-acetyl-3-O-(1-carboxyvinyl)-alpha-D-glucosamine + phosphate</text>
        <dbReference type="Rhea" id="RHEA:18681"/>
        <dbReference type="ChEBI" id="CHEBI:43474"/>
        <dbReference type="ChEBI" id="CHEBI:57705"/>
        <dbReference type="ChEBI" id="CHEBI:58702"/>
        <dbReference type="ChEBI" id="CHEBI:68483"/>
        <dbReference type="EC" id="2.5.1.7"/>
    </reaction>
</comment>
<comment type="pathway">
    <text evidence="1">Cell wall biogenesis; peptidoglycan biosynthesis.</text>
</comment>
<comment type="subcellular location">
    <subcellularLocation>
        <location evidence="1">Cytoplasm</location>
    </subcellularLocation>
</comment>
<comment type="similarity">
    <text evidence="1">Belongs to the EPSP synthase family. MurA subfamily.</text>
</comment>
<evidence type="ECO:0000255" key="1">
    <source>
        <dbReference type="HAMAP-Rule" id="MF_00111"/>
    </source>
</evidence>
<organism>
    <name type="scientific">Helicobacter acinonychis (strain Sheeba)</name>
    <dbReference type="NCBI Taxonomy" id="382638"/>
    <lineage>
        <taxon>Bacteria</taxon>
        <taxon>Pseudomonadati</taxon>
        <taxon>Campylobacterota</taxon>
        <taxon>Epsilonproteobacteria</taxon>
        <taxon>Campylobacterales</taxon>
        <taxon>Helicobacteraceae</taxon>
        <taxon>Helicobacter</taxon>
    </lineage>
</organism>
<gene>
    <name evidence="1" type="primary">murA</name>
    <name type="ordered locus">Hac_1066</name>
</gene>
<keyword id="KW-0131">Cell cycle</keyword>
<keyword id="KW-0132">Cell division</keyword>
<keyword id="KW-0133">Cell shape</keyword>
<keyword id="KW-0961">Cell wall biogenesis/degradation</keyword>
<keyword id="KW-0963">Cytoplasm</keyword>
<keyword id="KW-0573">Peptidoglycan synthesis</keyword>
<keyword id="KW-0670">Pyruvate</keyword>
<keyword id="KW-0808">Transferase</keyword>
<proteinExistence type="inferred from homology"/>
<protein>
    <recommendedName>
        <fullName evidence="1">UDP-N-acetylglucosamine 1-carboxyvinyltransferase</fullName>
        <ecNumber evidence="1">2.5.1.7</ecNumber>
    </recommendedName>
    <alternativeName>
        <fullName evidence="1">Enoylpyruvate transferase</fullName>
    </alternativeName>
    <alternativeName>
        <fullName evidence="1">UDP-N-acetylglucosamine enolpyruvyl transferase</fullName>
        <shortName evidence="1">EPT</shortName>
    </alternativeName>
</protein>
<accession>Q17WZ6</accession>
<sequence>MDFLEIVGQIPLKGGVEISGAKNSALPILAATLLSQQEVTISALPQVADIKAMASLLQNLGAELDWFNSHTLKLCAKSLRHTEATYDLVRKMRASILVLGPLLARFKECLVSLPGGCAIGARPVDLHLKAMQQLGAEITIEQGYIHAKAAKGLKGNDILFDKISVTGTENALMAASLAKGITRIINAAKEPEIAQLCTFLQSGGVEIEGVGSSELKIRGVESDALSLKDIQIIPDRIEAGTYLCVGAITNSQLKINHIIPNHLQAITDKLIEIGFPLDIQQNSIEIYPAKKRQAFEITTKEYPGFPTDMQAQFMALATQCLGTSVIEETLFENRFMHASELQRLGANISLKTNIATIHGSTELTGSDVMATDLRASSALILAALVAKGVSRVHRIYHLDRGYERLEDKINALGAKVLRLKEK</sequence>
<reference key="1">
    <citation type="journal article" date="2006" name="PLoS Genet.">
        <title>Who ate whom? Adaptive Helicobacter genomic changes that accompanied a host jump from early humans to large felines.</title>
        <authorList>
            <person name="Eppinger M."/>
            <person name="Baar C."/>
            <person name="Linz B."/>
            <person name="Raddatz G."/>
            <person name="Lanz C."/>
            <person name="Keller H."/>
            <person name="Morelli G."/>
            <person name="Gressmann H."/>
            <person name="Achtman M."/>
            <person name="Schuster S.C."/>
        </authorList>
    </citation>
    <scope>NUCLEOTIDE SEQUENCE [LARGE SCALE GENOMIC DNA]</scope>
    <source>
        <strain>Sheeba</strain>
    </source>
</reference>